<comment type="function">
    <text evidence="1">ATP-dependent specificity component of the Clp protease. It directs the protease to specific substrates. Can perform chaperone functions in the absence of ClpP.</text>
</comment>
<comment type="subunit">
    <text evidence="1">Component of the ClpX-ClpP complex. Forms a hexameric ring that, in the presence of ATP, binds to fourteen ClpP subunits assembled into a disk-like structure with a central cavity, resembling the structure of eukaryotic proteasomes.</text>
</comment>
<comment type="similarity">
    <text evidence="1">Belongs to the ClpX chaperone family.</text>
</comment>
<sequence length="425" mass="47009">MSKVSGSNGGDSKNTLYCSFCGKSQHEVRKLIAGPTVFICDECVELCMDIIREENKTSMVKSRDGVPTPQEIIKVLDEYVIGQQQAKRILSVAVHNHYKRLAHAAKSSDVELAKSNIMLVGPTGCGKTYLAQTLARIIDVPFTMADATTLTEAGYVGEDVENIILKLLQAADYNVERAQRGIVYIDEVDKISRKSDNPSITRDVSGEGVQQALLKIMEGTVASVPPQGGRKHPQQEFLQVDTTNILFICGGAFAGLDKIISARGEKTSIGFGATVRAPEDRRVGEVLRELEPEDLVKFGLIPEFIGRLPVLATLEDLDEDALIQILSEPKNALVKQYQRLFEMEDVELNFHEDALREIARRAIVRKTGARGLRSIMEKILLDTMFELPTLEGVREVVISEEVVKGTARPLYIYSERSEEKTNVSA</sequence>
<evidence type="ECO:0000255" key="1">
    <source>
        <dbReference type="HAMAP-Rule" id="MF_00175"/>
    </source>
</evidence>
<evidence type="ECO:0000255" key="2">
    <source>
        <dbReference type="PROSITE-ProRule" id="PRU01250"/>
    </source>
</evidence>
<name>CLPX_SINMW</name>
<reference key="1">
    <citation type="submission" date="2007-06" db="EMBL/GenBank/DDBJ databases">
        <title>Complete sequence of Sinorhizobium medicae WSM419 chromosome.</title>
        <authorList>
            <consortium name="US DOE Joint Genome Institute"/>
            <person name="Copeland A."/>
            <person name="Lucas S."/>
            <person name="Lapidus A."/>
            <person name="Barry K."/>
            <person name="Glavina del Rio T."/>
            <person name="Dalin E."/>
            <person name="Tice H."/>
            <person name="Pitluck S."/>
            <person name="Chain P."/>
            <person name="Malfatti S."/>
            <person name="Shin M."/>
            <person name="Vergez L."/>
            <person name="Schmutz J."/>
            <person name="Larimer F."/>
            <person name="Land M."/>
            <person name="Hauser L."/>
            <person name="Kyrpides N."/>
            <person name="Mikhailova N."/>
            <person name="Reeve W.G."/>
            <person name="Richardson P."/>
        </authorList>
    </citation>
    <scope>NUCLEOTIDE SEQUENCE [LARGE SCALE GENOMIC DNA]</scope>
    <source>
        <strain>WSM419</strain>
    </source>
</reference>
<protein>
    <recommendedName>
        <fullName evidence="1">ATP-dependent Clp protease ATP-binding subunit ClpX</fullName>
    </recommendedName>
</protein>
<feature type="chain" id="PRO_1000024666" description="ATP-dependent Clp protease ATP-binding subunit ClpX">
    <location>
        <begin position="1"/>
        <end position="425"/>
    </location>
</feature>
<feature type="domain" description="ClpX-type ZB" evidence="2">
    <location>
        <begin position="6"/>
        <end position="59"/>
    </location>
</feature>
<feature type="binding site" evidence="2">
    <location>
        <position position="18"/>
    </location>
    <ligand>
        <name>Zn(2+)</name>
        <dbReference type="ChEBI" id="CHEBI:29105"/>
    </ligand>
</feature>
<feature type="binding site" evidence="2">
    <location>
        <position position="21"/>
    </location>
    <ligand>
        <name>Zn(2+)</name>
        <dbReference type="ChEBI" id="CHEBI:29105"/>
    </ligand>
</feature>
<feature type="binding site" evidence="2">
    <location>
        <position position="40"/>
    </location>
    <ligand>
        <name>Zn(2+)</name>
        <dbReference type="ChEBI" id="CHEBI:29105"/>
    </ligand>
</feature>
<feature type="binding site" evidence="2">
    <location>
        <position position="43"/>
    </location>
    <ligand>
        <name>Zn(2+)</name>
        <dbReference type="ChEBI" id="CHEBI:29105"/>
    </ligand>
</feature>
<feature type="binding site" evidence="1">
    <location>
        <begin position="122"/>
        <end position="129"/>
    </location>
    <ligand>
        <name>ATP</name>
        <dbReference type="ChEBI" id="CHEBI:30616"/>
    </ligand>
</feature>
<dbReference type="EMBL" id="CP000738">
    <property type="protein sequence ID" value="ABR59728.1"/>
    <property type="molecule type" value="Genomic_DNA"/>
</dbReference>
<dbReference type="RefSeq" id="WP_011975067.1">
    <property type="nucleotide sequence ID" value="NC_009636.1"/>
</dbReference>
<dbReference type="RefSeq" id="YP_001326563.1">
    <property type="nucleotide sequence ID" value="NC_009636.1"/>
</dbReference>
<dbReference type="SMR" id="A6U7U8"/>
<dbReference type="STRING" id="366394.Smed_0873"/>
<dbReference type="GeneID" id="61612293"/>
<dbReference type="KEGG" id="smd:Smed_0873"/>
<dbReference type="PATRIC" id="fig|366394.8.peg.3988"/>
<dbReference type="eggNOG" id="COG1219">
    <property type="taxonomic scope" value="Bacteria"/>
</dbReference>
<dbReference type="HOGENOM" id="CLU_014218_8_2_5"/>
<dbReference type="OrthoDB" id="9804062at2"/>
<dbReference type="Proteomes" id="UP000001108">
    <property type="component" value="Chromosome"/>
</dbReference>
<dbReference type="GO" id="GO:0009376">
    <property type="term" value="C:HslUV protease complex"/>
    <property type="evidence" value="ECO:0007669"/>
    <property type="project" value="TreeGrafter"/>
</dbReference>
<dbReference type="GO" id="GO:0005524">
    <property type="term" value="F:ATP binding"/>
    <property type="evidence" value="ECO:0007669"/>
    <property type="project" value="UniProtKB-UniRule"/>
</dbReference>
<dbReference type="GO" id="GO:0016887">
    <property type="term" value="F:ATP hydrolysis activity"/>
    <property type="evidence" value="ECO:0007669"/>
    <property type="project" value="InterPro"/>
</dbReference>
<dbReference type="GO" id="GO:0140662">
    <property type="term" value="F:ATP-dependent protein folding chaperone"/>
    <property type="evidence" value="ECO:0007669"/>
    <property type="project" value="InterPro"/>
</dbReference>
<dbReference type="GO" id="GO:0046983">
    <property type="term" value="F:protein dimerization activity"/>
    <property type="evidence" value="ECO:0007669"/>
    <property type="project" value="InterPro"/>
</dbReference>
<dbReference type="GO" id="GO:0051082">
    <property type="term" value="F:unfolded protein binding"/>
    <property type="evidence" value="ECO:0007669"/>
    <property type="project" value="UniProtKB-UniRule"/>
</dbReference>
<dbReference type="GO" id="GO:0008270">
    <property type="term" value="F:zinc ion binding"/>
    <property type="evidence" value="ECO:0007669"/>
    <property type="project" value="InterPro"/>
</dbReference>
<dbReference type="GO" id="GO:0051301">
    <property type="term" value="P:cell division"/>
    <property type="evidence" value="ECO:0007669"/>
    <property type="project" value="TreeGrafter"/>
</dbReference>
<dbReference type="GO" id="GO:0051603">
    <property type="term" value="P:proteolysis involved in protein catabolic process"/>
    <property type="evidence" value="ECO:0007669"/>
    <property type="project" value="TreeGrafter"/>
</dbReference>
<dbReference type="CDD" id="cd19497">
    <property type="entry name" value="RecA-like_ClpX"/>
    <property type="match status" value="1"/>
</dbReference>
<dbReference type="FunFam" id="1.10.8.60:FF:000002">
    <property type="entry name" value="ATP-dependent Clp protease ATP-binding subunit ClpX"/>
    <property type="match status" value="1"/>
</dbReference>
<dbReference type="FunFam" id="3.40.50.300:FF:000005">
    <property type="entry name" value="ATP-dependent Clp protease ATP-binding subunit ClpX"/>
    <property type="match status" value="1"/>
</dbReference>
<dbReference type="Gene3D" id="1.10.8.60">
    <property type="match status" value="1"/>
</dbReference>
<dbReference type="Gene3D" id="6.20.220.10">
    <property type="entry name" value="ClpX chaperone, C4-type zinc finger domain"/>
    <property type="match status" value="1"/>
</dbReference>
<dbReference type="Gene3D" id="3.40.50.300">
    <property type="entry name" value="P-loop containing nucleotide triphosphate hydrolases"/>
    <property type="match status" value="1"/>
</dbReference>
<dbReference type="HAMAP" id="MF_00175">
    <property type="entry name" value="ClpX"/>
    <property type="match status" value="1"/>
</dbReference>
<dbReference type="InterPro" id="IPR003593">
    <property type="entry name" value="AAA+_ATPase"/>
</dbReference>
<dbReference type="InterPro" id="IPR050052">
    <property type="entry name" value="ATP-dep_Clp_protease_ClpX"/>
</dbReference>
<dbReference type="InterPro" id="IPR003959">
    <property type="entry name" value="ATPase_AAA_core"/>
</dbReference>
<dbReference type="InterPro" id="IPR019489">
    <property type="entry name" value="Clp_ATPase_C"/>
</dbReference>
<dbReference type="InterPro" id="IPR004487">
    <property type="entry name" value="Clp_protease_ATP-bd_su_ClpX"/>
</dbReference>
<dbReference type="InterPro" id="IPR046425">
    <property type="entry name" value="ClpX_bact"/>
</dbReference>
<dbReference type="InterPro" id="IPR027417">
    <property type="entry name" value="P-loop_NTPase"/>
</dbReference>
<dbReference type="InterPro" id="IPR010603">
    <property type="entry name" value="Znf_CppX_C4"/>
</dbReference>
<dbReference type="InterPro" id="IPR038366">
    <property type="entry name" value="Znf_CppX_C4_sf"/>
</dbReference>
<dbReference type="NCBIfam" id="TIGR00382">
    <property type="entry name" value="clpX"/>
    <property type="match status" value="1"/>
</dbReference>
<dbReference type="NCBIfam" id="NF003745">
    <property type="entry name" value="PRK05342.1"/>
    <property type="match status" value="1"/>
</dbReference>
<dbReference type="PANTHER" id="PTHR48102:SF7">
    <property type="entry name" value="ATP-DEPENDENT CLP PROTEASE ATP-BINDING SUBUNIT CLPX-LIKE, MITOCHONDRIAL"/>
    <property type="match status" value="1"/>
</dbReference>
<dbReference type="PANTHER" id="PTHR48102">
    <property type="entry name" value="ATP-DEPENDENT CLP PROTEASE ATP-BINDING SUBUNIT CLPX-LIKE, MITOCHONDRIAL-RELATED"/>
    <property type="match status" value="1"/>
</dbReference>
<dbReference type="Pfam" id="PF07724">
    <property type="entry name" value="AAA_2"/>
    <property type="match status" value="1"/>
</dbReference>
<dbReference type="Pfam" id="PF10431">
    <property type="entry name" value="ClpB_D2-small"/>
    <property type="match status" value="1"/>
</dbReference>
<dbReference type="Pfam" id="PF06689">
    <property type="entry name" value="zf-C4_ClpX"/>
    <property type="match status" value="1"/>
</dbReference>
<dbReference type="SMART" id="SM00382">
    <property type="entry name" value="AAA"/>
    <property type="match status" value="1"/>
</dbReference>
<dbReference type="SMART" id="SM01086">
    <property type="entry name" value="ClpB_D2-small"/>
    <property type="match status" value="1"/>
</dbReference>
<dbReference type="SMART" id="SM00994">
    <property type="entry name" value="zf-C4_ClpX"/>
    <property type="match status" value="1"/>
</dbReference>
<dbReference type="SUPFAM" id="SSF57716">
    <property type="entry name" value="Glucocorticoid receptor-like (DNA-binding domain)"/>
    <property type="match status" value="1"/>
</dbReference>
<dbReference type="SUPFAM" id="SSF52540">
    <property type="entry name" value="P-loop containing nucleoside triphosphate hydrolases"/>
    <property type="match status" value="1"/>
</dbReference>
<dbReference type="PROSITE" id="PS51902">
    <property type="entry name" value="CLPX_ZB"/>
    <property type="match status" value="1"/>
</dbReference>
<accession>A6U7U8</accession>
<proteinExistence type="inferred from homology"/>
<gene>
    <name evidence="1" type="primary">clpX</name>
    <name type="ordered locus">Smed_0873</name>
</gene>
<organism>
    <name type="scientific">Sinorhizobium medicae (strain WSM419)</name>
    <name type="common">Ensifer medicae</name>
    <dbReference type="NCBI Taxonomy" id="366394"/>
    <lineage>
        <taxon>Bacteria</taxon>
        <taxon>Pseudomonadati</taxon>
        <taxon>Pseudomonadota</taxon>
        <taxon>Alphaproteobacteria</taxon>
        <taxon>Hyphomicrobiales</taxon>
        <taxon>Rhizobiaceae</taxon>
        <taxon>Sinorhizobium/Ensifer group</taxon>
        <taxon>Sinorhizobium</taxon>
    </lineage>
</organism>
<keyword id="KW-0067">ATP-binding</keyword>
<keyword id="KW-0143">Chaperone</keyword>
<keyword id="KW-0479">Metal-binding</keyword>
<keyword id="KW-0547">Nucleotide-binding</keyword>
<keyword id="KW-0862">Zinc</keyword>